<gene>
    <name evidence="1" type="primary">buk</name>
    <name type="ordered locus">Bcer98_2858</name>
</gene>
<organism>
    <name type="scientific">Bacillus cytotoxicus (strain DSM 22905 / CIP 110041 / 391-98 / NVH 391-98)</name>
    <dbReference type="NCBI Taxonomy" id="315749"/>
    <lineage>
        <taxon>Bacteria</taxon>
        <taxon>Bacillati</taxon>
        <taxon>Bacillota</taxon>
        <taxon>Bacilli</taxon>
        <taxon>Bacillales</taxon>
        <taxon>Bacillaceae</taxon>
        <taxon>Bacillus</taxon>
        <taxon>Bacillus cereus group</taxon>
    </lineage>
</organism>
<feature type="chain" id="PRO_1000081939" description="Probable butyrate kinase">
    <location>
        <begin position="1"/>
        <end position="367"/>
    </location>
</feature>
<reference key="1">
    <citation type="journal article" date="2008" name="Chem. Biol. Interact.">
        <title>Extending the Bacillus cereus group genomics to putative food-borne pathogens of different toxicity.</title>
        <authorList>
            <person name="Lapidus A."/>
            <person name="Goltsman E."/>
            <person name="Auger S."/>
            <person name="Galleron N."/>
            <person name="Segurens B."/>
            <person name="Dossat C."/>
            <person name="Land M.L."/>
            <person name="Broussolle V."/>
            <person name="Brillard J."/>
            <person name="Guinebretiere M.-H."/>
            <person name="Sanchis V."/>
            <person name="Nguen-the C."/>
            <person name="Lereclus D."/>
            <person name="Richardson P."/>
            <person name="Wincker P."/>
            <person name="Weissenbach J."/>
            <person name="Ehrlich S.D."/>
            <person name="Sorokin A."/>
        </authorList>
    </citation>
    <scope>NUCLEOTIDE SEQUENCE [LARGE SCALE GENOMIC DNA]</scope>
    <source>
        <strain>DSM 22905 / CIP 110041 / 391-98 / NVH 391-98</strain>
    </source>
</reference>
<evidence type="ECO:0000255" key="1">
    <source>
        <dbReference type="HAMAP-Rule" id="MF_00542"/>
    </source>
</evidence>
<sequence length="367" mass="39828">MSVNRILVINPGSTSTKIGVFDNERPVLEETIRHDTGEIKKYKRIIDQYEFRKETILEILHSHGINISKLSAVCGRGGLLRPIEGGTYTVNEAMLEDLKNGYSGHHASNLGGILAYEIASGLNIPAFIVDPVVVDEMEPIARISGIAGMERKSIFHALNQKAVARKVAAEIGHKYEDLNLIIAHMGGGITVGAHKNGKVIDVNNGLNGEGPFSPERAGTVPVGQLIEMCFSGNYYRDEMMKKIVGQGGLVSLIGTNDAIKVENMVEKGDPEATLIYKAMAYQVAKEIGGASAVLHGKIDAIVLTGGLAYSKILINEIKERVNWIADVIVHPGEDELQALAEGALRVLREEEAPKEYVVREKETVARG</sequence>
<protein>
    <recommendedName>
        <fullName evidence="1">Probable butyrate kinase</fullName>
        <shortName evidence="1">BK</shortName>
        <ecNumber evidence="1">2.7.2.7</ecNumber>
    </recommendedName>
    <alternativeName>
        <fullName evidence="1">Branched-chain carboxylic acid kinase</fullName>
    </alternativeName>
</protein>
<proteinExistence type="inferred from homology"/>
<dbReference type="EC" id="2.7.2.7" evidence="1"/>
<dbReference type="EMBL" id="CP000764">
    <property type="protein sequence ID" value="ABS23091.1"/>
    <property type="molecule type" value="Genomic_DNA"/>
</dbReference>
<dbReference type="RefSeq" id="WP_012095318.1">
    <property type="nucleotide sequence ID" value="NC_009674.1"/>
</dbReference>
<dbReference type="SMR" id="A7GSI3"/>
<dbReference type="STRING" id="315749.Bcer98_2858"/>
<dbReference type="GeneID" id="33898112"/>
<dbReference type="KEGG" id="bcy:Bcer98_2858"/>
<dbReference type="eggNOG" id="COG3426">
    <property type="taxonomic scope" value="Bacteria"/>
</dbReference>
<dbReference type="HOGENOM" id="CLU_048716_0_0_9"/>
<dbReference type="OrthoDB" id="9771859at2"/>
<dbReference type="Proteomes" id="UP000002300">
    <property type="component" value="Chromosome"/>
</dbReference>
<dbReference type="GO" id="GO:0005737">
    <property type="term" value="C:cytoplasm"/>
    <property type="evidence" value="ECO:0007669"/>
    <property type="project" value="UniProtKB-SubCell"/>
</dbReference>
<dbReference type="GO" id="GO:0008776">
    <property type="term" value="F:acetate kinase activity"/>
    <property type="evidence" value="ECO:0007669"/>
    <property type="project" value="TreeGrafter"/>
</dbReference>
<dbReference type="GO" id="GO:0005524">
    <property type="term" value="F:ATP binding"/>
    <property type="evidence" value="ECO:0007669"/>
    <property type="project" value="UniProtKB-KW"/>
</dbReference>
<dbReference type="GO" id="GO:0047761">
    <property type="term" value="F:butyrate kinase activity"/>
    <property type="evidence" value="ECO:0007669"/>
    <property type="project" value="UniProtKB-UniRule"/>
</dbReference>
<dbReference type="GO" id="GO:0006083">
    <property type="term" value="P:acetate metabolic process"/>
    <property type="evidence" value="ECO:0007669"/>
    <property type="project" value="TreeGrafter"/>
</dbReference>
<dbReference type="CDD" id="cd24011">
    <property type="entry name" value="ASKHA_NBD_BK"/>
    <property type="match status" value="1"/>
</dbReference>
<dbReference type="Gene3D" id="3.30.420.40">
    <property type="match status" value="2"/>
</dbReference>
<dbReference type="HAMAP" id="MF_00542">
    <property type="entry name" value="Butyrate_kinase"/>
    <property type="match status" value="1"/>
</dbReference>
<dbReference type="InterPro" id="IPR000890">
    <property type="entry name" value="Aliphatic_acid_kin_short-chain"/>
</dbReference>
<dbReference type="InterPro" id="IPR023865">
    <property type="entry name" value="Aliphatic_acid_kinase_CS"/>
</dbReference>
<dbReference type="InterPro" id="IPR043129">
    <property type="entry name" value="ATPase_NBD"/>
</dbReference>
<dbReference type="InterPro" id="IPR011245">
    <property type="entry name" value="Butyrate_kin"/>
</dbReference>
<dbReference type="NCBIfam" id="TIGR02707">
    <property type="entry name" value="butyr_kinase"/>
    <property type="match status" value="1"/>
</dbReference>
<dbReference type="NCBIfam" id="NF002834">
    <property type="entry name" value="PRK03011.1-5"/>
    <property type="match status" value="1"/>
</dbReference>
<dbReference type="PANTHER" id="PTHR21060">
    <property type="entry name" value="ACETATE KINASE"/>
    <property type="match status" value="1"/>
</dbReference>
<dbReference type="PANTHER" id="PTHR21060:SF3">
    <property type="entry name" value="BUTYRATE KINASE 2-RELATED"/>
    <property type="match status" value="1"/>
</dbReference>
<dbReference type="Pfam" id="PF00871">
    <property type="entry name" value="Acetate_kinase"/>
    <property type="match status" value="1"/>
</dbReference>
<dbReference type="PIRSF" id="PIRSF036458">
    <property type="entry name" value="Butyrate_kin"/>
    <property type="match status" value="1"/>
</dbReference>
<dbReference type="PRINTS" id="PR00471">
    <property type="entry name" value="ACETATEKNASE"/>
</dbReference>
<dbReference type="SUPFAM" id="SSF53067">
    <property type="entry name" value="Actin-like ATPase domain"/>
    <property type="match status" value="2"/>
</dbReference>
<dbReference type="PROSITE" id="PS01075">
    <property type="entry name" value="ACETATE_KINASE_1"/>
    <property type="match status" value="1"/>
</dbReference>
<dbReference type="PROSITE" id="PS01076">
    <property type="entry name" value="ACETATE_KINASE_2"/>
    <property type="match status" value="1"/>
</dbReference>
<keyword id="KW-0067">ATP-binding</keyword>
<keyword id="KW-0963">Cytoplasm</keyword>
<keyword id="KW-0418">Kinase</keyword>
<keyword id="KW-0547">Nucleotide-binding</keyword>
<keyword id="KW-0808">Transferase</keyword>
<comment type="catalytic activity">
    <reaction evidence="1">
        <text>butanoate + ATP = butanoyl phosphate + ADP</text>
        <dbReference type="Rhea" id="RHEA:13585"/>
        <dbReference type="ChEBI" id="CHEBI:17968"/>
        <dbReference type="ChEBI" id="CHEBI:30616"/>
        <dbReference type="ChEBI" id="CHEBI:58079"/>
        <dbReference type="ChEBI" id="CHEBI:456216"/>
        <dbReference type="EC" id="2.7.2.7"/>
    </reaction>
</comment>
<comment type="subcellular location">
    <subcellularLocation>
        <location evidence="1">Cytoplasm</location>
    </subcellularLocation>
</comment>
<comment type="similarity">
    <text evidence="1">Belongs to the acetokinase family.</text>
</comment>
<name>BUK_BACCN</name>
<accession>A7GSI3</accession>